<dbReference type="EC" id="3.4.24.16" evidence="1"/>
<dbReference type="EMBL" id="AJ300837">
    <property type="protein sequence ID" value="CAC27329.1"/>
    <property type="molecule type" value="mRNA"/>
</dbReference>
<dbReference type="EMBL" id="AB033052">
    <property type="protein sequence ID" value="BAA86540.2"/>
    <property type="molecule type" value="mRNA"/>
</dbReference>
<dbReference type="CCDS" id="CCDS3989.1"/>
<dbReference type="RefSeq" id="NP_065777.1">
    <property type="nucleotide sequence ID" value="NM_020726.5"/>
</dbReference>
<dbReference type="PDB" id="5LUZ">
    <property type="method" value="X-ray"/>
    <property type="resolution" value="2.70 A"/>
    <property type="chains" value="A/B=38-704"/>
</dbReference>
<dbReference type="PDB" id="5LV0">
    <property type="method" value="X-ray"/>
    <property type="resolution" value="2.70 A"/>
    <property type="chains" value="A/B=38-704"/>
</dbReference>
<dbReference type="PDB" id="8VJU">
    <property type="method" value="X-ray"/>
    <property type="resolution" value="1.99 A"/>
    <property type="chains" value="A=38-704"/>
</dbReference>
<dbReference type="PDB" id="8VJV">
    <property type="method" value="X-ray"/>
    <property type="resolution" value="2.12 A"/>
    <property type="chains" value="A=38-704"/>
</dbReference>
<dbReference type="PDB" id="8VJW">
    <property type="method" value="X-ray"/>
    <property type="resolution" value="2.49 A"/>
    <property type="chains" value="A/B=38-704"/>
</dbReference>
<dbReference type="PDB" id="8VJX">
    <property type="method" value="X-ray"/>
    <property type="resolution" value="2.89 A"/>
    <property type="chains" value="A=38-704"/>
</dbReference>
<dbReference type="PDB" id="8VJY">
    <property type="method" value="X-ray"/>
    <property type="resolution" value="1.95 A"/>
    <property type="chains" value="A/C=38-704"/>
</dbReference>
<dbReference type="PDBsum" id="5LUZ"/>
<dbReference type="PDBsum" id="5LV0"/>
<dbReference type="PDBsum" id="8VJU"/>
<dbReference type="PDBsum" id="8VJV"/>
<dbReference type="PDBsum" id="8VJW"/>
<dbReference type="PDBsum" id="8VJX"/>
<dbReference type="PDBsum" id="8VJY"/>
<dbReference type="SMR" id="Q9BYT8"/>
<dbReference type="BioGRID" id="121555">
    <property type="interactions" value="63"/>
</dbReference>
<dbReference type="FunCoup" id="Q9BYT8">
    <property type="interactions" value="969"/>
</dbReference>
<dbReference type="IntAct" id="Q9BYT8">
    <property type="interactions" value="39"/>
</dbReference>
<dbReference type="STRING" id="9606.ENSP00000370372"/>
<dbReference type="BindingDB" id="Q9BYT8"/>
<dbReference type="ChEMBL" id="CHEMBL5465352"/>
<dbReference type="MEROPS" id="M03.002"/>
<dbReference type="GlyGen" id="Q9BYT8">
    <property type="glycosylation" value="2 sites, 1 O-linked glycan (1 site)"/>
</dbReference>
<dbReference type="iPTMnet" id="Q9BYT8"/>
<dbReference type="PhosphoSitePlus" id="Q9BYT8"/>
<dbReference type="SwissPalm" id="Q9BYT8"/>
<dbReference type="BioMuta" id="NLN"/>
<dbReference type="DMDM" id="20139130"/>
<dbReference type="jPOST" id="Q9BYT8"/>
<dbReference type="MassIVE" id="Q9BYT8"/>
<dbReference type="PaxDb" id="9606-ENSP00000370372"/>
<dbReference type="PeptideAtlas" id="Q9BYT8"/>
<dbReference type="ProteomicsDB" id="79707"/>
<dbReference type="Pumba" id="Q9BYT8"/>
<dbReference type="Antibodypedia" id="23804">
    <property type="antibodies" value="284 antibodies from 26 providers"/>
</dbReference>
<dbReference type="DNASU" id="57486"/>
<dbReference type="Ensembl" id="ENST00000380985.10">
    <property type="protein sequence ID" value="ENSP00000370372.5"/>
    <property type="gene ID" value="ENSG00000123213.23"/>
</dbReference>
<dbReference type="GeneID" id="57486"/>
<dbReference type="KEGG" id="hsa:57486"/>
<dbReference type="MANE-Select" id="ENST00000380985.10">
    <property type="protein sequence ID" value="ENSP00000370372.5"/>
    <property type="RefSeq nucleotide sequence ID" value="NM_020726.5"/>
    <property type="RefSeq protein sequence ID" value="NP_065777.1"/>
</dbReference>
<dbReference type="UCSC" id="uc003juf.3">
    <property type="organism name" value="human"/>
</dbReference>
<dbReference type="AGR" id="HGNC:16058"/>
<dbReference type="CTD" id="57486"/>
<dbReference type="DisGeNET" id="57486"/>
<dbReference type="GeneCards" id="NLN"/>
<dbReference type="HGNC" id="HGNC:16058">
    <property type="gene designation" value="NLN"/>
</dbReference>
<dbReference type="HPA" id="ENSG00000123213">
    <property type="expression patterns" value="Low tissue specificity"/>
</dbReference>
<dbReference type="MIM" id="611530">
    <property type="type" value="gene"/>
</dbReference>
<dbReference type="neXtProt" id="NX_Q9BYT8"/>
<dbReference type="OpenTargets" id="ENSG00000123213"/>
<dbReference type="PharmGKB" id="PA31651"/>
<dbReference type="VEuPathDB" id="HostDB:ENSG00000123213"/>
<dbReference type="eggNOG" id="KOG2089">
    <property type="taxonomic scope" value="Eukaryota"/>
</dbReference>
<dbReference type="GeneTree" id="ENSGT00950000183171"/>
<dbReference type="InParanoid" id="Q9BYT8"/>
<dbReference type="OMA" id="RSGAWCS"/>
<dbReference type="OrthoDB" id="534666at2759"/>
<dbReference type="PAN-GO" id="Q9BYT8">
    <property type="GO annotations" value="4 GO annotations based on evolutionary models"/>
</dbReference>
<dbReference type="PhylomeDB" id="Q9BYT8"/>
<dbReference type="TreeFam" id="TF300459"/>
<dbReference type="BRENDA" id="3.4.24.16">
    <property type="organism ID" value="2681"/>
</dbReference>
<dbReference type="PathwayCommons" id="Q9BYT8"/>
<dbReference type="Reactome" id="R-HSA-375276">
    <property type="pathway name" value="Peptide ligand-binding receptors"/>
</dbReference>
<dbReference type="SignaLink" id="Q9BYT8"/>
<dbReference type="BioGRID-ORCS" id="57486">
    <property type="hits" value="13 hits in 1158 CRISPR screens"/>
</dbReference>
<dbReference type="ChiTaRS" id="NLN">
    <property type="organism name" value="human"/>
</dbReference>
<dbReference type="GeneWiki" id="NLN_(gene)"/>
<dbReference type="GenomeRNAi" id="57486"/>
<dbReference type="Pharos" id="Q9BYT8">
    <property type="development level" value="Tbio"/>
</dbReference>
<dbReference type="PRO" id="PR:Q9BYT8"/>
<dbReference type="Proteomes" id="UP000005640">
    <property type="component" value="Chromosome 5"/>
</dbReference>
<dbReference type="RNAct" id="Q9BYT8">
    <property type="molecule type" value="protein"/>
</dbReference>
<dbReference type="Bgee" id="ENSG00000123213">
    <property type="expression patterns" value="Expressed in endothelial cell and 174 other cell types or tissues"/>
</dbReference>
<dbReference type="ExpressionAtlas" id="Q9BYT8">
    <property type="expression patterns" value="baseline and differential"/>
</dbReference>
<dbReference type="GO" id="GO:0005829">
    <property type="term" value="C:cytosol"/>
    <property type="evidence" value="ECO:0007669"/>
    <property type="project" value="UniProtKB-SubCell"/>
</dbReference>
<dbReference type="GO" id="GO:0005576">
    <property type="term" value="C:extracellular region"/>
    <property type="evidence" value="ECO:0000304"/>
    <property type="project" value="Reactome"/>
</dbReference>
<dbReference type="GO" id="GO:0005758">
    <property type="term" value="C:mitochondrial intermembrane space"/>
    <property type="evidence" value="ECO:0000318"/>
    <property type="project" value="GO_Central"/>
</dbReference>
<dbReference type="GO" id="GO:0005739">
    <property type="term" value="C:mitochondrion"/>
    <property type="evidence" value="ECO:0006056"/>
    <property type="project" value="FlyBase"/>
</dbReference>
<dbReference type="GO" id="GO:0005886">
    <property type="term" value="C:plasma membrane"/>
    <property type="evidence" value="ECO:0007669"/>
    <property type="project" value="Ensembl"/>
</dbReference>
<dbReference type="GO" id="GO:0046872">
    <property type="term" value="F:metal ion binding"/>
    <property type="evidence" value="ECO:0007669"/>
    <property type="project" value="UniProtKB-KW"/>
</dbReference>
<dbReference type="GO" id="GO:0004222">
    <property type="term" value="F:metalloendopeptidase activity"/>
    <property type="evidence" value="ECO:0000318"/>
    <property type="project" value="GO_Central"/>
</dbReference>
<dbReference type="GO" id="GO:0042277">
    <property type="term" value="F:peptide binding"/>
    <property type="evidence" value="ECO:0007669"/>
    <property type="project" value="Ensembl"/>
</dbReference>
<dbReference type="GO" id="GO:0007186">
    <property type="term" value="P:G protein-coupled receptor signaling pathway"/>
    <property type="evidence" value="ECO:0000304"/>
    <property type="project" value="Reactome"/>
</dbReference>
<dbReference type="GO" id="GO:0006518">
    <property type="term" value="P:peptide metabolic process"/>
    <property type="evidence" value="ECO:0000318"/>
    <property type="project" value="GO_Central"/>
</dbReference>
<dbReference type="GO" id="GO:0006508">
    <property type="term" value="P:proteolysis"/>
    <property type="evidence" value="ECO:0000318"/>
    <property type="project" value="GO_Central"/>
</dbReference>
<dbReference type="GO" id="GO:0006111">
    <property type="term" value="P:regulation of gluconeogenesis"/>
    <property type="evidence" value="ECO:0007669"/>
    <property type="project" value="Ensembl"/>
</dbReference>
<dbReference type="GO" id="GO:1902809">
    <property type="term" value="P:regulation of skeletal muscle fiber differentiation"/>
    <property type="evidence" value="ECO:0007669"/>
    <property type="project" value="Ensembl"/>
</dbReference>
<dbReference type="CDD" id="cd06455">
    <property type="entry name" value="M3A_TOP"/>
    <property type="match status" value="1"/>
</dbReference>
<dbReference type="FunFam" id="1.20.1050.40:FF:000001">
    <property type="entry name" value="Thimet oligopeptidase 1"/>
    <property type="match status" value="1"/>
</dbReference>
<dbReference type="FunFam" id="3.40.390.10:FF:000006">
    <property type="entry name" value="Thimet oligopeptidase 1"/>
    <property type="match status" value="1"/>
</dbReference>
<dbReference type="Gene3D" id="3.40.390.10">
    <property type="entry name" value="Collagenase (Catalytic Domain)"/>
    <property type="match status" value="1"/>
</dbReference>
<dbReference type="Gene3D" id="1.20.1050.40">
    <property type="entry name" value="Endopeptidase. Chain P, domain 1"/>
    <property type="match status" value="1"/>
</dbReference>
<dbReference type="Gene3D" id="1.10.1370.10">
    <property type="entry name" value="Neurolysin, domain 3"/>
    <property type="match status" value="1"/>
</dbReference>
<dbReference type="InterPro" id="IPR024079">
    <property type="entry name" value="MetalloPept_cat_dom_sf"/>
</dbReference>
<dbReference type="InterPro" id="IPR024077">
    <property type="entry name" value="Neurolysin/TOP_dom2"/>
</dbReference>
<dbReference type="InterPro" id="IPR024080">
    <property type="entry name" value="Neurolysin/TOP_N"/>
</dbReference>
<dbReference type="InterPro" id="IPR045090">
    <property type="entry name" value="Pept_M3A_M3B"/>
</dbReference>
<dbReference type="InterPro" id="IPR001567">
    <property type="entry name" value="Pept_M3A_M3B_dom"/>
</dbReference>
<dbReference type="PANTHER" id="PTHR11804:SF44">
    <property type="entry name" value="NEUROLYSIN, MITOCHONDRIAL"/>
    <property type="match status" value="1"/>
</dbReference>
<dbReference type="PANTHER" id="PTHR11804">
    <property type="entry name" value="PROTEASE M3 THIMET OLIGOPEPTIDASE-RELATED"/>
    <property type="match status" value="1"/>
</dbReference>
<dbReference type="Pfam" id="PF01432">
    <property type="entry name" value="Peptidase_M3"/>
    <property type="match status" value="1"/>
</dbReference>
<dbReference type="SUPFAM" id="SSF55486">
    <property type="entry name" value="Metalloproteases ('zincins'), catalytic domain"/>
    <property type="match status" value="1"/>
</dbReference>
<dbReference type="PROSITE" id="PS00142">
    <property type="entry name" value="ZINC_PROTEASE"/>
    <property type="match status" value="1"/>
</dbReference>
<protein>
    <recommendedName>
        <fullName>Neurolysin, mitochondrial</fullName>
        <ecNumber evidence="1">3.4.24.16</ecNumber>
    </recommendedName>
    <alternativeName>
        <fullName>Angiotensin-binding protein</fullName>
    </alternativeName>
    <alternativeName>
        <fullName>Microsomal endopeptidase</fullName>
        <shortName>MEP</shortName>
    </alternativeName>
    <alternativeName>
        <fullName>Mitochondrial oligopeptidase M</fullName>
    </alternativeName>
    <alternativeName>
        <fullName>Neurotensin endopeptidase</fullName>
    </alternativeName>
</protein>
<evidence type="ECO:0000250" key="1">
    <source>
        <dbReference type="UniProtKB" id="P42676"/>
    </source>
</evidence>
<evidence type="ECO:0000250" key="2">
    <source>
        <dbReference type="UniProtKB" id="P52888"/>
    </source>
</evidence>
<evidence type="ECO:0000255" key="3">
    <source>
        <dbReference type="PROSITE-ProRule" id="PRU10095"/>
    </source>
</evidence>
<evidence type="ECO:0000305" key="4"/>
<evidence type="ECO:0007744" key="5">
    <source>
    </source>
</evidence>
<evidence type="ECO:0007829" key="6">
    <source>
        <dbReference type="PDB" id="5LUZ"/>
    </source>
</evidence>
<evidence type="ECO:0007829" key="7">
    <source>
        <dbReference type="PDB" id="8VJW"/>
    </source>
</evidence>
<evidence type="ECO:0007829" key="8">
    <source>
        <dbReference type="PDB" id="8VJY"/>
    </source>
</evidence>
<gene>
    <name type="primary">NLN</name>
    <name type="synonym">AGTBP</name>
    <name type="synonym">KIAA1226</name>
</gene>
<organism>
    <name type="scientific">Homo sapiens</name>
    <name type="common">Human</name>
    <dbReference type="NCBI Taxonomy" id="9606"/>
    <lineage>
        <taxon>Eukaryota</taxon>
        <taxon>Metazoa</taxon>
        <taxon>Chordata</taxon>
        <taxon>Craniata</taxon>
        <taxon>Vertebrata</taxon>
        <taxon>Euteleostomi</taxon>
        <taxon>Mammalia</taxon>
        <taxon>Eutheria</taxon>
        <taxon>Euarchontoglires</taxon>
        <taxon>Primates</taxon>
        <taxon>Haplorrhini</taxon>
        <taxon>Catarrhini</taxon>
        <taxon>Hominidae</taxon>
        <taxon>Homo</taxon>
    </lineage>
</organism>
<comment type="function">
    <text evidence="1">Hydrolyzes oligopeptides such as neurotensin, bradykinin and dynorphin A (By similarity). Acts as a regulator of cannabinoid signaling pathway by mediating degradation of hemopressin, an antagonist peptide of the cannabinoid receptor CNR1 (By similarity).</text>
</comment>
<comment type="catalytic activity">
    <reaction evidence="1">
        <text>Preferential cleavage in neurotensin: 10-Pro-|-Tyr-11.</text>
        <dbReference type="EC" id="3.4.24.16"/>
    </reaction>
</comment>
<comment type="cofactor">
    <cofactor evidence="2">
        <name>Zn(2+)</name>
        <dbReference type="ChEBI" id="CHEBI:29105"/>
    </cofactor>
    <text evidence="2">Binds 1 zinc ion per subunit.</text>
</comment>
<comment type="subcellular location">
    <subcellularLocation>
        <location evidence="1">Mitochondrion intermembrane space</location>
    </subcellularLocation>
    <subcellularLocation>
        <location evidence="1">Cytoplasm</location>
        <location evidence="1">Cytosol</location>
    </subcellularLocation>
</comment>
<comment type="similarity">
    <text evidence="4">Belongs to the peptidase M3 family.</text>
</comment>
<proteinExistence type="evidence at protein level"/>
<keyword id="KW-0002">3D-structure</keyword>
<keyword id="KW-0007">Acetylation</keyword>
<keyword id="KW-0963">Cytoplasm</keyword>
<keyword id="KW-0378">Hydrolase</keyword>
<keyword id="KW-0479">Metal-binding</keyword>
<keyword id="KW-0482">Metalloprotease</keyword>
<keyword id="KW-0496">Mitochondrion</keyword>
<keyword id="KW-0645">Protease</keyword>
<keyword id="KW-1267">Proteomics identification</keyword>
<keyword id="KW-1185">Reference proteome</keyword>
<keyword id="KW-0809">Transit peptide</keyword>
<keyword id="KW-0862">Zinc</keyword>
<name>NEUL_HUMAN</name>
<sequence>MIARCLLAVRSLRRVGGSRILLRMTLGREVMSPLQAMSSYTVAGRNVLRWDLSPEQIKTRTEELIVQTKQVYDAVGMLGIEEVTYENCLQALADVEVKYIVERTMLDFPQHVSSDKEVRAASTEADKRLSRFDIEMSMRGDIFERIVHLQETCDLGKIKPEARRYLEKSIKMGKRNGLHLPEQVQNEIKSMKKRMSELCIDFNKNLNEDDTFLVFSKAELGALPDDFIDSLEKTDDDKYKITLKYPHYFPVMKKCCIPETRRRMEMAFNTRCKEENTIILQQLLPLRTKVAKLLGYSTHADFVLEMNTAKSTSRVTAFLDDLSQKLKPLGEAEREFILNLKKKECKDRGFEYDGKINAWDLYYYMTQTEELKYSIDQEFLKEYFPIEVVTEGLLNTYQELLGLSFEQMTDAHVWNKSVTLYTVKDKATGEVLGQFYLDLYPREGKYNHAACFGLQPGCLLPDGSRMMAVAALVVNFSQPVAGRPSLLRHDEVRTYFHEFGHVMHQICAQTDFARFSGTNVETDFVEVPSQMLENWVWDVDSLRRLSKHYKDGSPIADDLLEKLVASRLVNTGLLTLRQIVLSKVDQSLHTNTSLDAASEYAKYCSEILGVAATPGTNMPATFGHLAGGYDGQYYGYLWSEVFSMDMFYSCFKKEGIMNPEVGMKYRNLILKPGGSLDGMDMLHNFLKREPNQKAFLMSRGLHAP</sequence>
<reference key="1">
    <citation type="submission" date="2001-01" db="EMBL/GenBank/DDBJ databases">
        <title>Cloning and sequencing of human neurolysin, an oligopeptidase of family M3.</title>
        <authorList>
            <person name="Chen J.M."/>
            <person name="Rawlings N.D."/>
            <person name="Barrett A.J."/>
        </authorList>
    </citation>
    <scope>NUCLEOTIDE SEQUENCE [MRNA]</scope>
</reference>
<reference key="2">
    <citation type="journal article" date="1999" name="DNA Res.">
        <title>Prediction of the coding sequences of unidentified human genes. XV. The complete sequences of 100 new cDNA clones from brain which code for large proteins in vitro.</title>
        <authorList>
            <person name="Nagase T."/>
            <person name="Ishikawa K."/>
            <person name="Kikuno R."/>
            <person name="Hirosawa M."/>
            <person name="Nomura N."/>
            <person name="Ohara O."/>
        </authorList>
    </citation>
    <scope>NUCLEOTIDE SEQUENCE [LARGE SCALE MRNA]</scope>
    <source>
        <tissue>Brain</tissue>
    </source>
</reference>
<reference key="3">
    <citation type="journal article" date="2002" name="DNA Res.">
        <title>Construction of expression-ready cDNA clones for KIAA genes: manual curation of 330 KIAA cDNA clones.</title>
        <authorList>
            <person name="Nakajima D."/>
            <person name="Okazaki N."/>
            <person name="Yamakawa H."/>
            <person name="Kikuno R."/>
            <person name="Ohara O."/>
            <person name="Nagase T."/>
        </authorList>
    </citation>
    <scope>SEQUENCE REVISION</scope>
</reference>
<reference key="4">
    <citation type="journal article" date="2008" name="Proc. Natl. Acad. Sci. U.S.A.">
        <title>A quantitative atlas of mitotic phosphorylation.</title>
        <authorList>
            <person name="Dephoure N."/>
            <person name="Zhou C."/>
            <person name="Villen J."/>
            <person name="Beausoleil S.A."/>
            <person name="Bakalarski C.E."/>
            <person name="Elledge S.J."/>
            <person name="Gygi S.P."/>
        </authorList>
    </citation>
    <scope>IDENTIFICATION BY MASS SPECTROMETRY [LARGE SCALE ANALYSIS]</scope>
    <source>
        <tissue>Cervix carcinoma</tissue>
    </source>
</reference>
<reference key="5">
    <citation type="journal article" date="2009" name="Science">
        <title>Lysine acetylation targets protein complexes and co-regulates major cellular functions.</title>
        <authorList>
            <person name="Choudhary C."/>
            <person name="Kumar C."/>
            <person name="Gnad F."/>
            <person name="Nielsen M.L."/>
            <person name="Rehman M."/>
            <person name="Walther T.C."/>
            <person name="Olsen J.V."/>
            <person name="Mann M."/>
        </authorList>
    </citation>
    <scope>ACETYLATION [LARGE SCALE ANALYSIS] AT LYS-664</scope>
    <scope>IDENTIFICATION BY MASS SPECTROMETRY [LARGE SCALE ANALYSIS]</scope>
</reference>
<reference key="6">
    <citation type="journal article" date="2010" name="Sci. Signal.">
        <title>Quantitative phosphoproteomics reveals widespread full phosphorylation site occupancy during mitosis.</title>
        <authorList>
            <person name="Olsen J.V."/>
            <person name="Vermeulen M."/>
            <person name="Santamaria A."/>
            <person name="Kumar C."/>
            <person name="Miller M.L."/>
            <person name="Jensen L.J."/>
            <person name="Gnad F."/>
            <person name="Cox J."/>
            <person name="Jensen T.S."/>
            <person name="Nigg E.A."/>
            <person name="Brunak S."/>
            <person name="Mann M."/>
        </authorList>
    </citation>
    <scope>IDENTIFICATION BY MASS SPECTROMETRY [LARGE SCALE ANALYSIS]</scope>
    <source>
        <tissue>Cervix carcinoma</tissue>
    </source>
</reference>
<reference key="7">
    <citation type="journal article" date="2011" name="BMC Syst. Biol.">
        <title>Initial characterization of the human central proteome.</title>
        <authorList>
            <person name="Burkard T.R."/>
            <person name="Planyavsky M."/>
            <person name="Kaupe I."/>
            <person name="Breitwieser F.P."/>
            <person name="Buerckstuemmer T."/>
            <person name="Bennett K.L."/>
            <person name="Superti-Furga G."/>
            <person name="Colinge J."/>
        </authorList>
    </citation>
    <scope>IDENTIFICATION BY MASS SPECTROMETRY [LARGE SCALE ANALYSIS]</scope>
</reference>
<reference key="8">
    <citation type="journal article" date="2013" name="J. Proteome Res.">
        <title>Toward a comprehensive characterization of a human cancer cell phosphoproteome.</title>
        <authorList>
            <person name="Zhou H."/>
            <person name="Di Palma S."/>
            <person name="Preisinger C."/>
            <person name="Peng M."/>
            <person name="Polat A.N."/>
            <person name="Heck A.J."/>
            <person name="Mohammed S."/>
        </authorList>
    </citation>
    <scope>IDENTIFICATION BY MASS SPECTROMETRY [LARGE SCALE ANALYSIS]</scope>
    <source>
        <tissue>Erythroleukemia</tissue>
    </source>
</reference>
<reference key="9">
    <citation type="journal article" date="2014" name="J. Proteomics">
        <title>An enzyme assisted RP-RPLC approach for in-depth analysis of human liver phosphoproteome.</title>
        <authorList>
            <person name="Bian Y."/>
            <person name="Song C."/>
            <person name="Cheng K."/>
            <person name="Dong M."/>
            <person name="Wang F."/>
            <person name="Huang J."/>
            <person name="Sun D."/>
            <person name="Wang L."/>
            <person name="Ye M."/>
            <person name="Zou H."/>
        </authorList>
    </citation>
    <scope>IDENTIFICATION BY MASS SPECTROMETRY [LARGE SCALE ANALYSIS]</scope>
    <source>
        <tissue>Liver</tissue>
    </source>
</reference>
<reference key="10">
    <citation type="journal article" date="2015" name="Proteomics">
        <title>N-terminome analysis of the human mitochondrial proteome.</title>
        <authorList>
            <person name="Vaca Jacome A.S."/>
            <person name="Rabilloud T."/>
            <person name="Schaeffer-Reiss C."/>
            <person name="Rompais M."/>
            <person name="Ayoub D."/>
            <person name="Lane L."/>
            <person name="Bairoch A."/>
            <person name="Van Dorsselaer A."/>
            <person name="Carapito C."/>
        </authorList>
    </citation>
    <scope>IDENTIFICATION BY MASS SPECTROMETRY [LARGE SCALE ANALYSIS]</scope>
</reference>
<feature type="transit peptide" description="Mitochondrion" evidence="1">
    <location>
        <begin position="1"/>
        <end position="37"/>
    </location>
</feature>
<feature type="chain" id="PRO_0000028575" description="Neurolysin, mitochondrial">
    <location>
        <begin position="38"/>
        <end position="704"/>
    </location>
</feature>
<feature type="active site" evidence="3">
    <location>
        <position position="498"/>
    </location>
</feature>
<feature type="binding site" evidence="3">
    <location>
        <position position="497"/>
    </location>
    <ligand>
        <name>Zn(2+)</name>
        <dbReference type="ChEBI" id="CHEBI:29105"/>
        <note>catalytic</note>
    </ligand>
</feature>
<feature type="binding site" evidence="3">
    <location>
        <position position="501"/>
    </location>
    <ligand>
        <name>Zn(2+)</name>
        <dbReference type="ChEBI" id="CHEBI:29105"/>
        <note>catalytic</note>
    </ligand>
</feature>
<feature type="binding site" evidence="3">
    <location>
        <position position="504"/>
    </location>
    <ligand>
        <name>Zn(2+)</name>
        <dbReference type="ChEBI" id="CHEBI:29105"/>
        <note>catalytic</note>
    </ligand>
</feature>
<feature type="modified residue" description="N6-acetyllysine" evidence="5">
    <location>
        <position position="664"/>
    </location>
</feature>
<feature type="sequence variant" id="VAR_062224" description="In dbSNP:rs34339013.">
    <original>G</original>
    <variation>S</variation>
    <location>
        <position position="79"/>
    </location>
</feature>
<feature type="sequence variant" id="VAR_054002" description="In dbSNP:rs34063558.">
    <original>S</original>
    <variation>G</variation>
    <location>
        <position position="323"/>
    </location>
</feature>
<feature type="sequence variant" id="VAR_054003" description="In dbSNP:rs6863012.">
    <original>K</original>
    <variation>R</variation>
    <location>
        <position position="372"/>
    </location>
</feature>
<feature type="sequence variant" id="VAR_054004" description="In dbSNP:rs2289884.">
    <original>S</original>
    <variation>G</variation>
    <location>
        <position position="417"/>
    </location>
</feature>
<feature type="sequence variant" id="VAR_024594" description="In dbSNP:rs6860508.">
    <original>P</original>
    <variation>S</variation>
    <location>
        <position position="704"/>
    </location>
</feature>
<feature type="turn" evidence="8">
    <location>
        <begin position="43"/>
        <end position="45"/>
    </location>
</feature>
<feature type="helix" evidence="8">
    <location>
        <begin position="54"/>
        <end position="77"/>
    </location>
</feature>
<feature type="helix" evidence="8">
    <location>
        <begin position="80"/>
        <end position="82"/>
    </location>
</feature>
<feature type="turn" evidence="8">
    <location>
        <begin position="85"/>
        <end position="88"/>
    </location>
</feature>
<feature type="helix" evidence="8">
    <location>
        <begin position="89"/>
        <end position="107"/>
    </location>
</feature>
<feature type="helix" evidence="8">
    <location>
        <begin position="109"/>
        <end position="112"/>
    </location>
</feature>
<feature type="helix" evidence="8">
    <location>
        <begin position="116"/>
        <end position="137"/>
    </location>
</feature>
<feature type="helix" evidence="8">
    <location>
        <begin position="140"/>
        <end position="152"/>
    </location>
</feature>
<feature type="helix" evidence="8">
    <location>
        <begin position="155"/>
        <end position="157"/>
    </location>
</feature>
<feature type="helix" evidence="8">
    <location>
        <begin position="160"/>
        <end position="174"/>
    </location>
</feature>
<feature type="turn" evidence="8">
    <location>
        <begin position="175"/>
        <end position="179"/>
    </location>
</feature>
<feature type="helix" evidence="8">
    <location>
        <begin position="182"/>
        <end position="208"/>
    </location>
</feature>
<feature type="strand" evidence="8">
    <location>
        <begin position="212"/>
        <end position="215"/>
    </location>
</feature>
<feature type="helix" evidence="8">
    <location>
        <begin position="218"/>
        <end position="220"/>
    </location>
</feature>
<feature type="helix" evidence="8">
    <location>
        <begin position="225"/>
        <end position="228"/>
    </location>
</feature>
<feature type="strand" evidence="8">
    <location>
        <begin position="231"/>
        <end position="233"/>
    </location>
</feature>
<feature type="strand" evidence="8">
    <location>
        <begin position="239"/>
        <end position="244"/>
    </location>
</feature>
<feature type="helix" evidence="8">
    <location>
        <begin position="245"/>
        <end position="254"/>
    </location>
</feature>
<feature type="helix" evidence="8">
    <location>
        <begin position="258"/>
        <end position="268"/>
    </location>
</feature>
<feature type="turn" evidence="8">
    <location>
        <begin position="269"/>
        <end position="272"/>
    </location>
</feature>
<feature type="helix" evidence="8">
    <location>
        <begin position="273"/>
        <end position="293"/>
    </location>
</feature>
<feature type="helix" evidence="8">
    <location>
        <begin position="299"/>
        <end position="304"/>
    </location>
</feature>
<feature type="helix" evidence="8">
    <location>
        <begin position="312"/>
        <end position="348"/>
    </location>
</feature>
<feature type="helix" evidence="8">
    <location>
        <begin position="358"/>
        <end position="360"/>
    </location>
</feature>
<feature type="helix" evidence="8">
    <location>
        <begin position="361"/>
        <end position="373"/>
    </location>
</feature>
<feature type="helix" evidence="8">
    <location>
        <begin position="377"/>
        <end position="380"/>
    </location>
</feature>
<feature type="helix" evidence="8">
    <location>
        <begin position="381"/>
        <end position="383"/>
    </location>
</feature>
<feature type="helix" evidence="8">
    <location>
        <begin position="386"/>
        <end position="401"/>
    </location>
</feature>
<feature type="strand" evidence="8">
    <location>
        <begin position="403"/>
        <end position="407"/>
    </location>
</feature>
<feature type="strand" evidence="8">
    <location>
        <begin position="419"/>
        <end position="425"/>
    </location>
</feature>
<feature type="turn" evidence="8">
    <location>
        <begin position="426"/>
        <end position="428"/>
    </location>
</feature>
<feature type="strand" evidence="8">
    <location>
        <begin position="431"/>
        <end position="438"/>
    </location>
</feature>
<feature type="strand" evidence="8">
    <location>
        <begin position="450"/>
        <end position="455"/>
    </location>
</feature>
<feature type="strand" evidence="6">
    <location>
        <begin position="461"/>
        <end position="465"/>
    </location>
</feature>
<feature type="strand" evidence="8">
    <location>
        <begin position="468"/>
        <end position="473"/>
    </location>
</feature>
<feature type="helix" evidence="8">
    <location>
        <begin position="489"/>
        <end position="507"/>
    </location>
</feature>
<feature type="strand" evidence="8">
    <location>
        <begin position="510"/>
        <end position="512"/>
    </location>
</feature>
<feature type="helix" evidence="8">
    <location>
        <begin position="513"/>
        <end position="515"/>
    </location>
</feature>
<feature type="turn" evidence="8">
    <location>
        <begin position="522"/>
        <end position="526"/>
    </location>
</feature>
<feature type="helix" evidence="8">
    <location>
        <begin position="527"/>
        <end position="533"/>
    </location>
</feature>
<feature type="helix" evidence="8">
    <location>
        <begin position="534"/>
        <end position="536"/>
    </location>
</feature>
<feature type="helix" evidence="8">
    <location>
        <begin position="539"/>
        <end position="544"/>
    </location>
</feature>
<feature type="turn" evidence="8">
    <location>
        <begin position="549"/>
        <end position="551"/>
    </location>
</feature>
<feature type="helix" evidence="8">
    <location>
        <begin position="557"/>
        <end position="565"/>
    </location>
</feature>
<feature type="helix" evidence="8">
    <location>
        <begin position="566"/>
        <end position="568"/>
    </location>
</feature>
<feature type="helix" evidence="8">
    <location>
        <begin position="571"/>
        <end position="588"/>
    </location>
</feature>
<feature type="strand" evidence="6">
    <location>
        <begin position="592"/>
        <end position="594"/>
    </location>
</feature>
<feature type="helix" evidence="8">
    <location>
        <begin position="596"/>
        <end position="606"/>
    </location>
</feature>
<feature type="helix" evidence="8">
    <location>
        <begin position="618"/>
        <end position="621"/>
    </location>
</feature>
<feature type="helix" evidence="8">
    <location>
        <begin position="623"/>
        <end position="626"/>
    </location>
</feature>
<feature type="turn" evidence="7">
    <location>
        <begin position="630"/>
        <end position="634"/>
    </location>
</feature>
<feature type="helix" evidence="8">
    <location>
        <begin position="635"/>
        <end position="654"/>
    </location>
</feature>
<feature type="helix" evidence="8">
    <location>
        <begin position="659"/>
        <end position="668"/>
    </location>
</feature>
<feature type="turn" evidence="8">
    <location>
        <begin position="669"/>
        <end position="674"/>
    </location>
</feature>
<feature type="helix" evidence="8">
    <location>
        <begin position="678"/>
        <end position="686"/>
    </location>
</feature>
<feature type="helix" evidence="8">
    <location>
        <begin position="693"/>
        <end position="698"/>
    </location>
</feature>
<accession>Q9BYT8</accession>
<accession>Q9ULJ4</accession>